<proteinExistence type="inferred from homology"/>
<comment type="similarity">
    <text evidence="1">Belongs to the bacterial ribosomal protein bL36 family.</text>
</comment>
<evidence type="ECO:0000255" key="1">
    <source>
        <dbReference type="HAMAP-Rule" id="MF_00251"/>
    </source>
</evidence>
<evidence type="ECO:0000305" key="2"/>
<sequence>MQVLSSLRSAKNRHPDCKIVRRRGRVYVICKSNPRFKAVQGGTHKKR</sequence>
<accession>Q1CL43</accession>
<accession>C4GQN3</accession>
<protein>
    <recommendedName>
        <fullName evidence="1">Large ribosomal subunit protein bL36</fullName>
    </recommendedName>
    <alternativeName>
        <fullName evidence="2">50S ribosomal protein L36</fullName>
    </alternativeName>
</protein>
<keyword id="KW-0687">Ribonucleoprotein</keyword>
<keyword id="KW-0689">Ribosomal protein</keyword>
<gene>
    <name evidence="1" type="primary">rpmJ</name>
    <name type="ordered locus">YPN_0955</name>
    <name type="ORF">YP516_1036</name>
</gene>
<organism>
    <name type="scientific">Yersinia pestis bv. Antiqua (strain Nepal516)</name>
    <dbReference type="NCBI Taxonomy" id="377628"/>
    <lineage>
        <taxon>Bacteria</taxon>
        <taxon>Pseudomonadati</taxon>
        <taxon>Pseudomonadota</taxon>
        <taxon>Gammaproteobacteria</taxon>
        <taxon>Enterobacterales</taxon>
        <taxon>Yersiniaceae</taxon>
        <taxon>Yersinia</taxon>
    </lineage>
</organism>
<feature type="chain" id="PRO_0000302336" description="Large ribosomal subunit protein bL36">
    <location>
        <begin position="1"/>
        <end position="47"/>
    </location>
</feature>
<dbReference type="EMBL" id="CP000305">
    <property type="protein sequence ID" value="ABG17287.1"/>
    <property type="molecule type" value="Genomic_DNA"/>
</dbReference>
<dbReference type="EMBL" id="ACNQ01000008">
    <property type="protein sequence ID" value="EEO77374.1"/>
    <property type="molecule type" value="Genomic_DNA"/>
</dbReference>
<dbReference type="SMR" id="Q1CL43"/>
<dbReference type="KEGG" id="ypn:YPN_0955"/>
<dbReference type="HOGENOM" id="CLU_135723_3_2_6"/>
<dbReference type="Proteomes" id="UP000008936">
    <property type="component" value="Chromosome"/>
</dbReference>
<dbReference type="GO" id="GO:1990904">
    <property type="term" value="C:ribonucleoprotein complex"/>
    <property type="evidence" value="ECO:0007669"/>
    <property type="project" value="UniProtKB-KW"/>
</dbReference>
<dbReference type="GO" id="GO:0005840">
    <property type="term" value="C:ribosome"/>
    <property type="evidence" value="ECO:0007669"/>
    <property type="project" value="UniProtKB-KW"/>
</dbReference>
<dbReference type="GO" id="GO:0003735">
    <property type="term" value="F:structural constituent of ribosome"/>
    <property type="evidence" value="ECO:0007669"/>
    <property type="project" value="InterPro"/>
</dbReference>
<dbReference type="GO" id="GO:0006412">
    <property type="term" value="P:translation"/>
    <property type="evidence" value="ECO:0007669"/>
    <property type="project" value="UniProtKB-UniRule"/>
</dbReference>
<dbReference type="HAMAP" id="MF_00251">
    <property type="entry name" value="Ribosomal_bL36"/>
    <property type="match status" value="1"/>
</dbReference>
<dbReference type="InterPro" id="IPR000473">
    <property type="entry name" value="Ribosomal_bL36"/>
</dbReference>
<dbReference type="InterPro" id="IPR035977">
    <property type="entry name" value="Ribosomal_bL36_sp"/>
</dbReference>
<dbReference type="InterPro" id="IPR047621">
    <property type="entry name" value="Ribosomal_L36_bact"/>
</dbReference>
<dbReference type="NCBIfam" id="NF002021">
    <property type="entry name" value="PRK00831.1"/>
    <property type="match status" value="1"/>
</dbReference>
<dbReference type="NCBIfam" id="TIGR01022">
    <property type="entry name" value="rpmJ_bact"/>
    <property type="match status" value="1"/>
</dbReference>
<dbReference type="PANTHER" id="PTHR47781">
    <property type="entry name" value="50S RIBOSOMAL PROTEIN L36 2"/>
    <property type="match status" value="1"/>
</dbReference>
<dbReference type="PANTHER" id="PTHR47781:SF1">
    <property type="entry name" value="LARGE RIBOSOMAL SUBUNIT PROTEIN BL36B"/>
    <property type="match status" value="1"/>
</dbReference>
<dbReference type="Pfam" id="PF00444">
    <property type="entry name" value="Ribosomal_L36"/>
    <property type="match status" value="1"/>
</dbReference>
<dbReference type="SUPFAM" id="SSF57840">
    <property type="entry name" value="Ribosomal protein L36"/>
    <property type="match status" value="1"/>
</dbReference>
<dbReference type="PROSITE" id="PS00828">
    <property type="entry name" value="RIBOSOMAL_L36"/>
    <property type="match status" value="1"/>
</dbReference>
<name>RL36_YERPN</name>
<reference key="1">
    <citation type="journal article" date="2006" name="J. Bacteriol.">
        <title>Complete genome sequence of Yersinia pestis strains Antiqua and Nepal516: evidence of gene reduction in an emerging pathogen.</title>
        <authorList>
            <person name="Chain P.S.G."/>
            <person name="Hu P."/>
            <person name="Malfatti S.A."/>
            <person name="Radnedge L."/>
            <person name="Larimer F."/>
            <person name="Vergez L.M."/>
            <person name="Worsham P."/>
            <person name="Chu M.C."/>
            <person name="Andersen G.L."/>
        </authorList>
    </citation>
    <scope>NUCLEOTIDE SEQUENCE [LARGE SCALE GENOMIC DNA]</scope>
    <source>
        <strain>Nepal516</strain>
    </source>
</reference>
<reference key="2">
    <citation type="submission" date="2009-04" db="EMBL/GenBank/DDBJ databases">
        <title>Yersinia pestis Nepal516A whole genome shotgun sequencing project.</title>
        <authorList>
            <person name="Plunkett G. III"/>
            <person name="Anderson B.D."/>
            <person name="Baumler D.J."/>
            <person name="Burland V."/>
            <person name="Cabot E.L."/>
            <person name="Glasner J.D."/>
            <person name="Mau B."/>
            <person name="Neeno-Eckwall E."/>
            <person name="Perna N.T."/>
            <person name="Munk A.C."/>
            <person name="Tapia R."/>
            <person name="Green L.D."/>
            <person name="Rogers Y.C."/>
            <person name="Detter J.C."/>
            <person name="Bruce D.C."/>
            <person name="Brettin T.S."/>
        </authorList>
    </citation>
    <scope>NUCLEOTIDE SEQUENCE [LARGE SCALE GENOMIC DNA]</scope>
    <source>
        <strain>Nepal516</strain>
    </source>
</reference>